<keyword id="KW-0235">DNA replication</keyword>
<keyword id="KW-0236">DNA replication inhibitor</keyword>
<keyword id="KW-1185">Reference proteome</keyword>
<dbReference type="EMBL" id="D32216">
    <property type="protein sequence ID" value="BAA06922.1"/>
    <property type="molecule type" value="Genomic_DNA"/>
</dbReference>
<dbReference type="EMBL" id="D84432">
    <property type="protein sequence ID" value="BAA12383.1"/>
    <property type="molecule type" value="Genomic_DNA"/>
</dbReference>
<dbReference type="EMBL" id="AL009126">
    <property type="protein sequence ID" value="CAB14572.1"/>
    <property type="molecule type" value="Genomic_DNA"/>
</dbReference>
<dbReference type="PIR" id="G69944">
    <property type="entry name" value="G69944"/>
</dbReference>
<dbReference type="RefSeq" id="WP_003245994.1">
    <property type="nucleotide sequence ID" value="NZ_OZ025638.1"/>
</dbReference>
<dbReference type="SMR" id="P45905"/>
<dbReference type="FunCoup" id="P45905">
    <property type="interactions" value="151"/>
</dbReference>
<dbReference type="IntAct" id="P45905">
    <property type="interactions" value="3"/>
</dbReference>
<dbReference type="STRING" id="224308.BSU26310"/>
<dbReference type="PaxDb" id="224308-BSU26310"/>
<dbReference type="EnsemblBacteria" id="CAB14572">
    <property type="protein sequence ID" value="CAB14572"/>
    <property type="gene ID" value="BSU_26310"/>
</dbReference>
<dbReference type="GeneID" id="937692"/>
<dbReference type="KEGG" id="bsu:BSU26310"/>
<dbReference type="PATRIC" id="fig|224308.179.peg.2859"/>
<dbReference type="InParanoid" id="P45905"/>
<dbReference type="OrthoDB" id="2908833at2"/>
<dbReference type="BioCyc" id="BSUB:BSU26310-MONOMER"/>
<dbReference type="Proteomes" id="UP000001570">
    <property type="component" value="Chromosome"/>
</dbReference>
<dbReference type="InterPro" id="IPR020278">
    <property type="entry name" value="YqaH-like"/>
</dbReference>
<dbReference type="Pfam" id="PF17448">
    <property type="entry name" value="YqaH"/>
    <property type="match status" value="1"/>
</dbReference>
<sequence>MNTNHFLKADVPIAKRKIESAEELSIMLSEALRDGDYEEAISLAGSIKVLTEDISRLANKGRLYETALKMQQQGINLTVVSRCIG</sequence>
<accession>P45905</accession>
<gene>
    <name type="primary">yqaH</name>
    <name type="ordered locus">BSU26310</name>
</gene>
<feature type="chain" id="PRO_0000049739" description="Small protein YqaH">
    <location>
        <begin position="1"/>
        <end position="85"/>
    </location>
</feature>
<feature type="mutagenesis site" description="Loss of interaction with DnaA but not Spo0A, partially prevents toxic effects of ectopic overexpression during normal growth and sporulation." evidence="1">
    <original>K</original>
    <variation>E</variation>
    <location>
        <position position="17"/>
    </location>
</feature>
<feature type="mutagenesis site" description="Loss of interaction with DnaA but not Spo0A." evidence="1">
    <original>E</original>
    <variation>K</variation>
    <location>
        <position position="38"/>
    </location>
</feature>
<feature type="mutagenesis site" description="Loss of interaction with DnaA but not Spo0A." evidence="1">
    <original>K</original>
    <variation>E</variation>
    <location>
        <position position="48"/>
    </location>
</feature>
<feature type="mutagenesis site" description="Interacts less well with DnaA, still interacts with Spo0A, prevents toxic effects of ectopic overexpression during growth." evidence="1">
    <original>R</original>
    <variation>W</variation>
    <location>
        <position position="56"/>
    </location>
</feature>
<reference key="1">
    <citation type="journal article" date="1995" name="Microbiology">
        <title>Complete nucleotide sequence of a skin element excised by DNA rearrangement during sporulation in Bacillus subtilis.</title>
        <authorList>
            <person name="Takemaru K."/>
            <person name="Mizuno M."/>
            <person name="Sato T."/>
            <person name="Takeuchi M."/>
            <person name="Kobayashi Y."/>
        </authorList>
    </citation>
    <scope>NUCLEOTIDE SEQUENCE [GENOMIC DNA]</scope>
    <source>
        <strain>168 / JH642</strain>
    </source>
</reference>
<reference key="2">
    <citation type="journal article" date="1996" name="Microbiology">
        <title>Systematic sequencing of the 283 kb 210 degrees-232 degrees region of the Bacillus subtilis genome containing the skin element and many sporulation genes.</title>
        <authorList>
            <person name="Mizuno M."/>
            <person name="Masuda S."/>
            <person name="Takemaru K."/>
            <person name="Hosono S."/>
            <person name="Sato T."/>
            <person name="Takeuchi M."/>
            <person name="Kobayashi Y."/>
        </authorList>
    </citation>
    <scope>NUCLEOTIDE SEQUENCE [GENOMIC DNA]</scope>
    <source>
        <strain>168 / JH642</strain>
    </source>
</reference>
<reference key="3">
    <citation type="journal article" date="1997" name="Nature">
        <title>The complete genome sequence of the Gram-positive bacterium Bacillus subtilis.</title>
        <authorList>
            <person name="Kunst F."/>
            <person name="Ogasawara N."/>
            <person name="Moszer I."/>
            <person name="Albertini A.M."/>
            <person name="Alloni G."/>
            <person name="Azevedo V."/>
            <person name="Bertero M.G."/>
            <person name="Bessieres P."/>
            <person name="Bolotin A."/>
            <person name="Borchert S."/>
            <person name="Borriss R."/>
            <person name="Boursier L."/>
            <person name="Brans A."/>
            <person name="Braun M."/>
            <person name="Brignell S.C."/>
            <person name="Bron S."/>
            <person name="Brouillet S."/>
            <person name="Bruschi C.V."/>
            <person name="Caldwell B."/>
            <person name="Capuano V."/>
            <person name="Carter N.M."/>
            <person name="Choi S.-K."/>
            <person name="Codani J.-J."/>
            <person name="Connerton I.F."/>
            <person name="Cummings N.J."/>
            <person name="Daniel R.A."/>
            <person name="Denizot F."/>
            <person name="Devine K.M."/>
            <person name="Duesterhoeft A."/>
            <person name="Ehrlich S.D."/>
            <person name="Emmerson P.T."/>
            <person name="Entian K.-D."/>
            <person name="Errington J."/>
            <person name="Fabret C."/>
            <person name="Ferrari E."/>
            <person name="Foulger D."/>
            <person name="Fritz C."/>
            <person name="Fujita M."/>
            <person name="Fujita Y."/>
            <person name="Fuma S."/>
            <person name="Galizzi A."/>
            <person name="Galleron N."/>
            <person name="Ghim S.-Y."/>
            <person name="Glaser P."/>
            <person name="Goffeau A."/>
            <person name="Golightly E.J."/>
            <person name="Grandi G."/>
            <person name="Guiseppi G."/>
            <person name="Guy B.J."/>
            <person name="Haga K."/>
            <person name="Haiech J."/>
            <person name="Harwood C.R."/>
            <person name="Henaut A."/>
            <person name="Hilbert H."/>
            <person name="Holsappel S."/>
            <person name="Hosono S."/>
            <person name="Hullo M.-F."/>
            <person name="Itaya M."/>
            <person name="Jones L.-M."/>
            <person name="Joris B."/>
            <person name="Karamata D."/>
            <person name="Kasahara Y."/>
            <person name="Klaerr-Blanchard M."/>
            <person name="Klein C."/>
            <person name="Kobayashi Y."/>
            <person name="Koetter P."/>
            <person name="Koningstein G."/>
            <person name="Krogh S."/>
            <person name="Kumano M."/>
            <person name="Kurita K."/>
            <person name="Lapidus A."/>
            <person name="Lardinois S."/>
            <person name="Lauber J."/>
            <person name="Lazarevic V."/>
            <person name="Lee S.-M."/>
            <person name="Levine A."/>
            <person name="Liu H."/>
            <person name="Masuda S."/>
            <person name="Mauel C."/>
            <person name="Medigue C."/>
            <person name="Medina N."/>
            <person name="Mellado R.P."/>
            <person name="Mizuno M."/>
            <person name="Moestl D."/>
            <person name="Nakai S."/>
            <person name="Noback M."/>
            <person name="Noone D."/>
            <person name="O'Reilly M."/>
            <person name="Ogawa K."/>
            <person name="Ogiwara A."/>
            <person name="Oudega B."/>
            <person name="Park S.-H."/>
            <person name="Parro V."/>
            <person name="Pohl T.M."/>
            <person name="Portetelle D."/>
            <person name="Porwollik S."/>
            <person name="Prescott A.M."/>
            <person name="Presecan E."/>
            <person name="Pujic P."/>
            <person name="Purnelle B."/>
            <person name="Rapoport G."/>
            <person name="Rey M."/>
            <person name="Reynolds S."/>
            <person name="Rieger M."/>
            <person name="Rivolta C."/>
            <person name="Rocha E."/>
            <person name="Roche B."/>
            <person name="Rose M."/>
            <person name="Sadaie Y."/>
            <person name="Sato T."/>
            <person name="Scanlan E."/>
            <person name="Schleich S."/>
            <person name="Schroeter R."/>
            <person name="Scoffone F."/>
            <person name="Sekiguchi J."/>
            <person name="Sekowska A."/>
            <person name="Seror S.J."/>
            <person name="Serror P."/>
            <person name="Shin B.-S."/>
            <person name="Soldo B."/>
            <person name="Sorokin A."/>
            <person name="Tacconi E."/>
            <person name="Takagi T."/>
            <person name="Takahashi H."/>
            <person name="Takemaru K."/>
            <person name="Takeuchi M."/>
            <person name="Tamakoshi A."/>
            <person name="Tanaka T."/>
            <person name="Terpstra P."/>
            <person name="Tognoni A."/>
            <person name="Tosato V."/>
            <person name="Uchiyama S."/>
            <person name="Vandenbol M."/>
            <person name="Vannier F."/>
            <person name="Vassarotti A."/>
            <person name="Viari A."/>
            <person name="Wambutt R."/>
            <person name="Wedler E."/>
            <person name="Wedler H."/>
            <person name="Weitzenegger T."/>
            <person name="Winters P."/>
            <person name="Wipat A."/>
            <person name="Yamamoto H."/>
            <person name="Yamane K."/>
            <person name="Yasumoto K."/>
            <person name="Yata K."/>
            <person name="Yoshida K."/>
            <person name="Yoshikawa H.-F."/>
            <person name="Zumstein E."/>
            <person name="Yoshikawa H."/>
            <person name="Danchin A."/>
        </authorList>
    </citation>
    <scope>NUCLEOTIDE SEQUENCE [LARGE SCALE GENOMIC DNA]</scope>
    <source>
        <strain>168</strain>
    </source>
</reference>
<reference key="4">
    <citation type="journal article" date="1995" name="Gene">
        <title>Analysis of a Bacillus subtilis genome fragment using a co-operative computer system prototype.</title>
        <authorList>
            <person name="Medigue C."/>
            <person name="Moszer I."/>
            <person name="Viari A."/>
            <person name="Danchin A."/>
        </authorList>
    </citation>
    <scope>IDENTIFICATION</scope>
</reference>
<reference key="5">
    <citation type="journal article" date="2022" name="Microbiology">
        <title>Prophage-encoded small protein YqaH counteracts the activities of the replication initiator DnaA in Bacillus subtilis.</title>
        <authorList>
            <person name="Ventroux M."/>
            <person name="Noirot-Gros M.F."/>
        </authorList>
    </citation>
    <scope>FUNCTION</scope>
    <scope>INTERACTION WITH DNAA AND SPO0A</scope>
    <scope>MUTAGENESIS OF LYS-17; GLU-38; LYS-48 AND ARG-56</scope>
    <source>
        <strain>168</strain>
    </source>
</reference>
<organism>
    <name type="scientific">Bacillus subtilis (strain 168)</name>
    <dbReference type="NCBI Taxonomy" id="224308"/>
    <lineage>
        <taxon>Bacteria</taxon>
        <taxon>Bacillati</taxon>
        <taxon>Bacillota</taxon>
        <taxon>Bacilli</taxon>
        <taxon>Bacillales</taxon>
        <taxon>Bacillaceae</taxon>
        <taxon>Bacillus</taxon>
    </lineage>
</organism>
<comment type="function">
    <text evidence="1">Binds to and counteracts DnaA replication initiation activity; overexpression decreases the number of replication initiation events. Also antagonizes DnaA's transcriptional regulation activity. Ectopic expression during exponential phase stops cell growth 2 hours after induction, leading to filamentation, aberrant chromosome segregation and septoid-trapped nucleoids. Overexpression during sporulation onset leads to dramatic reductions in spore formation.</text>
</comment>
<comment type="subunit">
    <text evidence="1">Interacts with domain IV of DnaA and with Spo0A.</text>
</comment>
<comment type="miscellaneous">
    <text evidence="3">Part of the prophage-like skin element which is not expressed during exponential growth. The element can be excised during sporulation, leading to possible expression of this protein.</text>
</comment>
<proteinExistence type="evidence at protein level"/>
<protein>
    <recommendedName>
        <fullName evidence="2">Small protein YqaH</fullName>
    </recommendedName>
</protein>
<name>YQAH_BACSU</name>
<evidence type="ECO:0000269" key="1">
    <source>
    </source>
</evidence>
<evidence type="ECO:0000303" key="2">
    <source>
    </source>
</evidence>
<evidence type="ECO:0000305" key="3"/>